<proteinExistence type="inferred from homology"/>
<reference key="1">
    <citation type="journal article" date="2007" name="J. Bacteriol.">
        <title>The complete genome sequence of Bacillus thuringiensis Al Hakam.</title>
        <authorList>
            <person name="Challacombe J.F."/>
            <person name="Altherr M.R."/>
            <person name="Xie G."/>
            <person name="Bhotika S.S."/>
            <person name="Brown N."/>
            <person name="Bruce D."/>
            <person name="Campbell C.S."/>
            <person name="Campbell M.L."/>
            <person name="Chen J."/>
            <person name="Chertkov O."/>
            <person name="Cleland C."/>
            <person name="Dimitrijevic M."/>
            <person name="Doggett N.A."/>
            <person name="Fawcett J.J."/>
            <person name="Glavina T."/>
            <person name="Goodwin L.A."/>
            <person name="Green L.D."/>
            <person name="Han C.S."/>
            <person name="Hill K.K."/>
            <person name="Hitchcock P."/>
            <person name="Jackson P.J."/>
            <person name="Keim P."/>
            <person name="Kewalramani A.R."/>
            <person name="Longmire J."/>
            <person name="Lucas S."/>
            <person name="Malfatti S."/>
            <person name="Martinez D."/>
            <person name="McMurry K."/>
            <person name="Meincke L.J."/>
            <person name="Misra M."/>
            <person name="Moseman B.L."/>
            <person name="Mundt M."/>
            <person name="Munk A.C."/>
            <person name="Okinaka R.T."/>
            <person name="Parson-Quintana B."/>
            <person name="Reilly L.P."/>
            <person name="Richardson P."/>
            <person name="Robinson D.L."/>
            <person name="Saunders E."/>
            <person name="Tapia R."/>
            <person name="Tesmer J.G."/>
            <person name="Thayer N."/>
            <person name="Thompson L.S."/>
            <person name="Tice H."/>
            <person name="Ticknor L.O."/>
            <person name="Wills P.L."/>
            <person name="Gilna P."/>
            <person name="Brettin T.S."/>
        </authorList>
    </citation>
    <scope>NUCLEOTIDE SEQUENCE [LARGE SCALE GENOMIC DNA]</scope>
    <source>
        <strain>Al Hakam</strain>
    </source>
</reference>
<gene>
    <name evidence="2" type="primary">trmB</name>
    <name type="ordered locus">BALH_4273</name>
</gene>
<comment type="function">
    <text evidence="2">Catalyzes the formation of N(7)-methylguanine at position 46 (m7G46) in tRNA.</text>
</comment>
<comment type="catalytic activity">
    <reaction evidence="2">
        <text>guanosine(46) in tRNA + S-adenosyl-L-methionine = N(7)-methylguanosine(46) in tRNA + S-adenosyl-L-homocysteine</text>
        <dbReference type="Rhea" id="RHEA:42708"/>
        <dbReference type="Rhea" id="RHEA-COMP:10188"/>
        <dbReference type="Rhea" id="RHEA-COMP:10189"/>
        <dbReference type="ChEBI" id="CHEBI:57856"/>
        <dbReference type="ChEBI" id="CHEBI:59789"/>
        <dbReference type="ChEBI" id="CHEBI:74269"/>
        <dbReference type="ChEBI" id="CHEBI:74480"/>
        <dbReference type="EC" id="2.1.1.33"/>
    </reaction>
</comment>
<comment type="pathway">
    <text evidence="2">tRNA modification; N(7)-methylguanine-tRNA biosynthesis.</text>
</comment>
<comment type="similarity">
    <text evidence="2">Belongs to the class I-like SAM-binding methyltransferase superfamily. TrmB family.</text>
</comment>
<keyword id="KW-0489">Methyltransferase</keyword>
<keyword id="KW-0949">S-adenosyl-L-methionine</keyword>
<keyword id="KW-0808">Transferase</keyword>
<keyword id="KW-0819">tRNA processing</keyword>
<dbReference type="EC" id="2.1.1.33" evidence="2"/>
<dbReference type="EMBL" id="CP000485">
    <property type="protein sequence ID" value="ABK87480.1"/>
    <property type="molecule type" value="Genomic_DNA"/>
</dbReference>
<dbReference type="RefSeq" id="WP_001239373.1">
    <property type="nucleotide sequence ID" value="NC_008600.1"/>
</dbReference>
<dbReference type="SMR" id="A0RJT7"/>
<dbReference type="KEGG" id="btl:BALH_4273"/>
<dbReference type="HOGENOM" id="CLU_050910_2_1_9"/>
<dbReference type="UniPathway" id="UPA00989"/>
<dbReference type="GO" id="GO:0043527">
    <property type="term" value="C:tRNA methyltransferase complex"/>
    <property type="evidence" value="ECO:0007669"/>
    <property type="project" value="TreeGrafter"/>
</dbReference>
<dbReference type="GO" id="GO:0008176">
    <property type="term" value="F:tRNA (guanine(46)-N7)-methyltransferase activity"/>
    <property type="evidence" value="ECO:0007669"/>
    <property type="project" value="UniProtKB-UniRule"/>
</dbReference>
<dbReference type="CDD" id="cd02440">
    <property type="entry name" value="AdoMet_MTases"/>
    <property type="match status" value="1"/>
</dbReference>
<dbReference type="FunFam" id="3.40.50.150:FF:000035">
    <property type="entry name" value="tRNA (guanine-N(7)-)-methyltransferase"/>
    <property type="match status" value="1"/>
</dbReference>
<dbReference type="Gene3D" id="3.40.50.150">
    <property type="entry name" value="Vaccinia Virus protein VP39"/>
    <property type="match status" value="1"/>
</dbReference>
<dbReference type="HAMAP" id="MF_01057">
    <property type="entry name" value="tRNA_methyltr_TrmB"/>
    <property type="match status" value="1"/>
</dbReference>
<dbReference type="InterPro" id="IPR029063">
    <property type="entry name" value="SAM-dependent_MTases_sf"/>
</dbReference>
<dbReference type="InterPro" id="IPR003358">
    <property type="entry name" value="tRNA_(Gua-N-7)_MeTrfase_Trmb"/>
</dbReference>
<dbReference type="InterPro" id="IPR055361">
    <property type="entry name" value="tRNA_methyltr_TrmB_bact"/>
</dbReference>
<dbReference type="NCBIfam" id="NF001080">
    <property type="entry name" value="PRK00121.2-2"/>
    <property type="match status" value="1"/>
</dbReference>
<dbReference type="NCBIfam" id="TIGR00091">
    <property type="entry name" value="tRNA (guanosine(46)-N7)-methyltransferase TrmB"/>
    <property type="match status" value="1"/>
</dbReference>
<dbReference type="PANTHER" id="PTHR23417">
    <property type="entry name" value="3-DEOXY-D-MANNO-OCTULOSONIC-ACID TRANSFERASE/TRNA GUANINE-N 7 - -METHYLTRANSFERASE"/>
    <property type="match status" value="1"/>
</dbReference>
<dbReference type="PANTHER" id="PTHR23417:SF14">
    <property type="entry name" value="PENTACOTRIPEPTIDE-REPEAT REGION OF PRORP DOMAIN-CONTAINING PROTEIN"/>
    <property type="match status" value="1"/>
</dbReference>
<dbReference type="Pfam" id="PF02390">
    <property type="entry name" value="Methyltransf_4"/>
    <property type="match status" value="1"/>
</dbReference>
<dbReference type="SUPFAM" id="SSF53335">
    <property type="entry name" value="S-adenosyl-L-methionine-dependent methyltransferases"/>
    <property type="match status" value="1"/>
</dbReference>
<dbReference type="PROSITE" id="PS51625">
    <property type="entry name" value="SAM_MT_TRMB"/>
    <property type="match status" value="1"/>
</dbReference>
<feature type="chain" id="PRO_0000288121" description="tRNA (guanine-N(7)-)-methyltransferase">
    <location>
        <begin position="1"/>
        <end position="217"/>
    </location>
</feature>
<feature type="active site" evidence="1">
    <location>
        <position position="118"/>
    </location>
</feature>
<feature type="binding site" evidence="2">
    <location>
        <position position="44"/>
    </location>
    <ligand>
        <name>S-adenosyl-L-methionine</name>
        <dbReference type="ChEBI" id="CHEBI:59789"/>
    </ligand>
</feature>
<feature type="binding site" evidence="2">
    <location>
        <position position="69"/>
    </location>
    <ligand>
        <name>S-adenosyl-L-methionine</name>
        <dbReference type="ChEBI" id="CHEBI:59789"/>
    </ligand>
</feature>
<feature type="binding site" evidence="2">
    <location>
        <position position="96"/>
    </location>
    <ligand>
        <name>S-adenosyl-L-methionine</name>
        <dbReference type="ChEBI" id="CHEBI:59789"/>
    </ligand>
</feature>
<feature type="binding site" evidence="2">
    <location>
        <position position="118"/>
    </location>
    <ligand>
        <name>S-adenosyl-L-methionine</name>
        <dbReference type="ChEBI" id="CHEBI:59789"/>
    </ligand>
</feature>
<feature type="binding site" evidence="2">
    <location>
        <position position="122"/>
    </location>
    <ligand>
        <name>substrate</name>
    </ligand>
</feature>
<feature type="binding site" evidence="2">
    <location>
        <position position="154"/>
    </location>
    <ligand>
        <name>substrate</name>
    </ligand>
</feature>
<feature type="binding site" evidence="2">
    <location>
        <begin position="191"/>
        <end position="194"/>
    </location>
    <ligand>
        <name>substrate</name>
    </ligand>
</feature>
<name>TRMB_BACAH</name>
<evidence type="ECO:0000250" key="1"/>
<evidence type="ECO:0000255" key="2">
    <source>
        <dbReference type="HAMAP-Rule" id="MF_01057"/>
    </source>
</evidence>
<protein>
    <recommendedName>
        <fullName evidence="2">tRNA (guanine-N(7)-)-methyltransferase</fullName>
        <ecNumber evidence="2">2.1.1.33</ecNumber>
    </recommendedName>
    <alternativeName>
        <fullName evidence="2">tRNA (guanine(46)-N(7))-methyltransferase</fullName>
    </alternativeName>
    <alternativeName>
        <fullName evidence="2">tRNA(m7G46)-methyltransferase</fullName>
    </alternativeName>
</protein>
<accession>A0RJT7</accession>
<sequence>MRLRHKPYAMDRINEYSHFVIGNPEERAGNWKEVFGNEQPIHIEVGTGRGRFMYDMAKANPHINYIGIEKFTSVVVDALDKLIEEELPNLKLINKDAEDLTVFFAKGEIDRVYLNFSDPWPKKRHTKRRLTYKTFLRNYEEVLVEGGEIHFKTDNQGLFEYSLMSMAEYGMLLTYLSLDLHNSDFEGNIMTEYEEKFSSKGHRIYRVEAKYRTEPMQ</sequence>
<organism>
    <name type="scientific">Bacillus thuringiensis (strain Al Hakam)</name>
    <dbReference type="NCBI Taxonomy" id="412694"/>
    <lineage>
        <taxon>Bacteria</taxon>
        <taxon>Bacillati</taxon>
        <taxon>Bacillota</taxon>
        <taxon>Bacilli</taxon>
        <taxon>Bacillales</taxon>
        <taxon>Bacillaceae</taxon>
        <taxon>Bacillus</taxon>
        <taxon>Bacillus cereus group</taxon>
    </lineage>
</organism>